<name>YTFE_SALTY</name>
<organism>
    <name type="scientific">Salmonella typhimurium (strain LT2 / SGSC1412 / ATCC 700720)</name>
    <dbReference type="NCBI Taxonomy" id="99287"/>
    <lineage>
        <taxon>Bacteria</taxon>
        <taxon>Pseudomonadati</taxon>
        <taxon>Pseudomonadota</taxon>
        <taxon>Gammaproteobacteria</taxon>
        <taxon>Enterobacterales</taxon>
        <taxon>Enterobacteriaceae</taxon>
        <taxon>Salmonella</taxon>
    </lineage>
</organism>
<accession>Q8ZK76</accession>
<dbReference type="EMBL" id="AE006468">
    <property type="protein sequence ID" value="AAL23219.1"/>
    <property type="molecule type" value="Genomic_DNA"/>
</dbReference>
<dbReference type="RefSeq" id="NP_463260.1">
    <property type="nucleotide sequence ID" value="NC_003197.2"/>
</dbReference>
<dbReference type="RefSeq" id="WP_000331468.1">
    <property type="nucleotide sequence ID" value="NC_003197.2"/>
</dbReference>
<dbReference type="SMR" id="Q8ZK76"/>
<dbReference type="STRING" id="99287.STM4399"/>
<dbReference type="PaxDb" id="99287-STM4399"/>
<dbReference type="DNASU" id="1255925"/>
<dbReference type="GeneID" id="1255925"/>
<dbReference type="KEGG" id="stm:STM4399"/>
<dbReference type="PATRIC" id="fig|99287.12.peg.4624"/>
<dbReference type="HOGENOM" id="CLU_076075_2_0_6"/>
<dbReference type="OMA" id="ACTTWRV"/>
<dbReference type="PhylomeDB" id="Q8ZK76"/>
<dbReference type="BioCyc" id="SENT99287:STM4399-MONOMER"/>
<dbReference type="Proteomes" id="UP000001014">
    <property type="component" value="Chromosome"/>
</dbReference>
<dbReference type="GO" id="GO:0005829">
    <property type="term" value="C:cytosol"/>
    <property type="evidence" value="ECO:0000318"/>
    <property type="project" value="GO_Central"/>
</dbReference>
<dbReference type="GO" id="GO:0005506">
    <property type="term" value="F:iron ion binding"/>
    <property type="evidence" value="ECO:0000318"/>
    <property type="project" value="GO_Central"/>
</dbReference>
<dbReference type="GO" id="GO:0098809">
    <property type="term" value="F:nitrite reductase activity"/>
    <property type="evidence" value="ECO:0000318"/>
    <property type="project" value="GO_Central"/>
</dbReference>
<dbReference type="GO" id="GO:0030091">
    <property type="term" value="P:protein repair"/>
    <property type="evidence" value="ECO:0000318"/>
    <property type="project" value="GO_Central"/>
</dbReference>
<dbReference type="GO" id="GO:0051409">
    <property type="term" value="P:response to nitrosative stress"/>
    <property type="evidence" value="ECO:0007669"/>
    <property type="project" value="UniProtKB-UniRule"/>
</dbReference>
<dbReference type="GO" id="GO:0006979">
    <property type="term" value="P:response to oxidative stress"/>
    <property type="evidence" value="ECO:0007669"/>
    <property type="project" value="UniProtKB-UniRule"/>
</dbReference>
<dbReference type="FunFam" id="1.20.120.520:FF:000001">
    <property type="entry name" value="Iron-sulfur cluster repair protein YtfE"/>
    <property type="match status" value="1"/>
</dbReference>
<dbReference type="Gene3D" id="1.20.120.520">
    <property type="entry name" value="nmb1532 protein domain like"/>
    <property type="match status" value="1"/>
</dbReference>
<dbReference type="HAMAP" id="MF_01606">
    <property type="entry name" value="RIC_YtfE"/>
    <property type="match status" value="1"/>
</dbReference>
<dbReference type="InterPro" id="IPR023742">
    <property type="entry name" value="FeS-repair_YftE"/>
</dbReference>
<dbReference type="InterPro" id="IPR012312">
    <property type="entry name" value="Hemerythrin-like"/>
</dbReference>
<dbReference type="InterPro" id="IPR019903">
    <property type="entry name" value="RIC_family"/>
</dbReference>
<dbReference type="NCBIfam" id="TIGR03652">
    <property type="entry name" value="FeS_repair_RIC"/>
    <property type="match status" value="1"/>
</dbReference>
<dbReference type="NCBIfam" id="NF008221">
    <property type="entry name" value="PRK10992.1"/>
    <property type="match status" value="1"/>
</dbReference>
<dbReference type="PANTHER" id="PTHR36438">
    <property type="entry name" value="IRON-SULFUR CLUSTER REPAIR PROTEIN YTFE"/>
    <property type="match status" value="1"/>
</dbReference>
<dbReference type="PANTHER" id="PTHR36438:SF1">
    <property type="entry name" value="IRON-SULFUR CLUSTER REPAIR PROTEIN YTFE"/>
    <property type="match status" value="1"/>
</dbReference>
<dbReference type="Pfam" id="PF01814">
    <property type="entry name" value="Hemerythrin"/>
    <property type="match status" value="1"/>
</dbReference>
<dbReference type="Pfam" id="PF04405">
    <property type="entry name" value="ScdA_N"/>
    <property type="match status" value="1"/>
</dbReference>
<protein>
    <recommendedName>
        <fullName evidence="1">Iron-sulfur cluster repair protein YtfE</fullName>
    </recommendedName>
</protein>
<feature type="chain" id="PRO_0000213055" description="Iron-sulfur cluster repair protein YtfE">
    <location>
        <begin position="1"/>
        <end position="220"/>
    </location>
</feature>
<reference key="1">
    <citation type="journal article" date="2001" name="Nature">
        <title>Complete genome sequence of Salmonella enterica serovar Typhimurium LT2.</title>
        <authorList>
            <person name="McClelland M."/>
            <person name="Sanderson K.E."/>
            <person name="Spieth J."/>
            <person name="Clifton S.W."/>
            <person name="Latreille P."/>
            <person name="Courtney L."/>
            <person name="Porwollik S."/>
            <person name="Ali J."/>
            <person name="Dante M."/>
            <person name="Du F."/>
            <person name="Hou S."/>
            <person name="Layman D."/>
            <person name="Leonard S."/>
            <person name="Nguyen C."/>
            <person name="Scott K."/>
            <person name="Holmes A."/>
            <person name="Grewal N."/>
            <person name="Mulvaney E."/>
            <person name="Ryan E."/>
            <person name="Sun H."/>
            <person name="Florea L."/>
            <person name="Miller W."/>
            <person name="Stoneking T."/>
            <person name="Nhan M."/>
            <person name="Waterston R."/>
            <person name="Wilson R.K."/>
        </authorList>
    </citation>
    <scope>NUCLEOTIDE SEQUENCE [LARGE SCALE GENOMIC DNA]</scope>
    <source>
        <strain>LT2 / SGSC1412 / ATCC 700720</strain>
    </source>
</reference>
<keyword id="KW-0963">Cytoplasm</keyword>
<keyword id="KW-0408">Iron</keyword>
<keyword id="KW-0479">Metal-binding</keyword>
<keyword id="KW-1185">Reference proteome</keyword>
<keyword id="KW-0346">Stress response</keyword>
<evidence type="ECO:0000255" key="1">
    <source>
        <dbReference type="HAMAP-Rule" id="MF_01606"/>
    </source>
</evidence>
<sequence>MAYRDQPLGELALSIPRASALFRQYDMDYCCGGKQTLARAAARHDVDIDIIEAQLAQLAEQPIEKDWRAVPLADIIDHIVVRYHDRHREQLPELILQATKVERVHADKPNVPRGLTKYLTALHEELSSHMMKEEQILFPMIKQGMGRQATGPISVMESEHDEAGELVDVIKHVTKNVTPPPEACTTWKAMYNGINEMIDDLMEHISLENNVLFPRALAGE</sequence>
<comment type="function">
    <text evidence="1">Di-iron-containing protein involved in the repair of iron-sulfur clusters damaged by oxidative and nitrosative stress conditions.</text>
</comment>
<comment type="subunit">
    <text evidence="1">Homodimer.</text>
</comment>
<comment type="subcellular location">
    <subcellularLocation>
        <location evidence="1">Cytoplasm</location>
    </subcellularLocation>
</comment>
<comment type="similarity">
    <text evidence="1">Belongs to the RIC family. YtfE subfamily.</text>
</comment>
<proteinExistence type="inferred from homology"/>
<gene>
    <name evidence="1" type="primary">ytfE</name>
    <name type="ordered locus">STM4399</name>
</gene>